<evidence type="ECO:0000255" key="1">
    <source>
        <dbReference type="HAMAP-Rule" id="MF_01637"/>
    </source>
</evidence>
<keyword id="KW-0004">4Fe-4S</keyword>
<keyword id="KW-0408">Iron</keyword>
<keyword id="KW-0411">Iron-sulfur</keyword>
<keyword id="KW-0479">Metal-binding</keyword>
<keyword id="KW-1185">Reference proteome</keyword>
<comment type="function">
    <text evidence="1">Involved in iron-sulfur cluster biogenesis. Binds a 4Fe-4S cluster, can transfer this cluster to apoproteins, and thereby intervenes in the maturation of Fe/S proteins. Could also act as a scaffold/chaperone for damaged Fe/S proteins.</text>
</comment>
<comment type="cofactor">
    <cofactor evidence="1">
        <name>[4Fe-4S] cluster</name>
        <dbReference type="ChEBI" id="CHEBI:49883"/>
    </cofactor>
    <text evidence="1">Binds 1 [4Fe-4S] cluster per subunit. The cluster is presumably bound at the interface of two monomers.</text>
</comment>
<comment type="subunit">
    <text evidence="1">Homodimer.</text>
</comment>
<comment type="similarity">
    <text evidence="1">Belongs to the NfuA family.</text>
</comment>
<feature type="chain" id="PRO_0000209473" description="Fe/S biogenesis protein NfuA">
    <location>
        <begin position="1"/>
        <end position="191"/>
    </location>
</feature>
<feature type="binding site" evidence="1">
    <location>
        <position position="149"/>
    </location>
    <ligand>
        <name>[4Fe-4S] cluster</name>
        <dbReference type="ChEBI" id="CHEBI:49883"/>
    </ligand>
</feature>
<feature type="binding site" evidence="1">
    <location>
        <position position="152"/>
    </location>
    <ligand>
        <name>[4Fe-4S] cluster</name>
        <dbReference type="ChEBI" id="CHEBI:49883"/>
    </ligand>
</feature>
<name>NFUA_BUCBP</name>
<protein>
    <recommendedName>
        <fullName evidence="1">Fe/S biogenesis protein NfuA</fullName>
    </recommendedName>
</protein>
<accession>Q89A55</accession>
<organism>
    <name type="scientific">Buchnera aphidicola subsp. Baizongia pistaciae (strain Bp)</name>
    <dbReference type="NCBI Taxonomy" id="224915"/>
    <lineage>
        <taxon>Bacteria</taxon>
        <taxon>Pseudomonadati</taxon>
        <taxon>Pseudomonadota</taxon>
        <taxon>Gammaproteobacteria</taxon>
        <taxon>Enterobacterales</taxon>
        <taxon>Erwiniaceae</taxon>
        <taxon>Buchnera</taxon>
    </lineage>
</organism>
<proteinExistence type="inferred from homology"/>
<dbReference type="EMBL" id="AE016826">
    <property type="protein sequence ID" value="AAO27191.1"/>
    <property type="molecule type" value="Genomic_DNA"/>
</dbReference>
<dbReference type="RefSeq" id="WP_011091592.1">
    <property type="nucleotide sequence ID" value="NC_004545.1"/>
</dbReference>
<dbReference type="SMR" id="Q89A55"/>
<dbReference type="STRING" id="224915.bbp_486"/>
<dbReference type="KEGG" id="bab:bbp_486"/>
<dbReference type="eggNOG" id="COG0316">
    <property type="taxonomic scope" value="Bacteria"/>
</dbReference>
<dbReference type="eggNOG" id="COG0694">
    <property type="taxonomic scope" value="Bacteria"/>
</dbReference>
<dbReference type="HOGENOM" id="CLU_094569_0_0_6"/>
<dbReference type="OrthoDB" id="9785450at2"/>
<dbReference type="Proteomes" id="UP000000601">
    <property type="component" value="Chromosome"/>
</dbReference>
<dbReference type="GO" id="GO:0051539">
    <property type="term" value="F:4 iron, 4 sulfur cluster binding"/>
    <property type="evidence" value="ECO:0007669"/>
    <property type="project" value="UniProtKB-UniRule"/>
</dbReference>
<dbReference type="GO" id="GO:0005506">
    <property type="term" value="F:iron ion binding"/>
    <property type="evidence" value="ECO:0007669"/>
    <property type="project" value="InterPro"/>
</dbReference>
<dbReference type="GO" id="GO:0016226">
    <property type="term" value="P:iron-sulfur cluster assembly"/>
    <property type="evidence" value="ECO:0007669"/>
    <property type="project" value="UniProtKB-UniRule"/>
</dbReference>
<dbReference type="GO" id="GO:0051604">
    <property type="term" value="P:protein maturation"/>
    <property type="evidence" value="ECO:0007669"/>
    <property type="project" value="UniProtKB-UniRule"/>
</dbReference>
<dbReference type="Gene3D" id="3.30.300.130">
    <property type="entry name" value="Fe-S cluster assembly (FSCA)"/>
    <property type="match status" value="1"/>
</dbReference>
<dbReference type="Gene3D" id="2.60.300.12">
    <property type="entry name" value="HesB-like domain"/>
    <property type="match status" value="1"/>
</dbReference>
<dbReference type="HAMAP" id="MF_01637">
    <property type="entry name" value="Fe_S_biogen_NfuA"/>
    <property type="match status" value="1"/>
</dbReference>
<dbReference type="InterPro" id="IPR017726">
    <property type="entry name" value="Fe/S_biogenesis_protein_NfuA"/>
</dbReference>
<dbReference type="InterPro" id="IPR034904">
    <property type="entry name" value="FSCA_dom_sf"/>
</dbReference>
<dbReference type="InterPro" id="IPR035903">
    <property type="entry name" value="HesB-like_dom_sf"/>
</dbReference>
<dbReference type="InterPro" id="IPR001075">
    <property type="entry name" value="NIF_FeS_clus_asmbl_NifU_C"/>
</dbReference>
<dbReference type="PANTHER" id="PTHR11178:SF51">
    <property type="entry name" value="FE_S BIOGENESIS PROTEIN NFUA"/>
    <property type="match status" value="1"/>
</dbReference>
<dbReference type="PANTHER" id="PTHR11178">
    <property type="entry name" value="IRON-SULFUR CLUSTER SCAFFOLD PROTEIN NFU-RELATED"/>
    <property type="match status" value="1"/>
</dbReference>
<dbReference type="Pfam" id="PF01106">
    <property type="entry name" value="NifU"/>
    <property type="match status" value="1"/>
</dbReference>
<dbReference type="SUPFAM" id="SSF117916">
    <property type="entry name" value="Fe-S cluster assembly (FSCA) domain-like"/>
    <property type="match status" value="1"/>
</dbReference>
<dbReference type="SUPFAM" id="SSF89360">
    <property type="entry name" value="HesB-like domain"/>
    <property type="match status" value="1"/>
</dbReference>
<sequence length="191" mass="21872">MVSVSQSAQNYFLNLLKKQKYGTNIRVYVKYPGTPVAKCGVSYCYKDDVTRLDVAFTMNKFIVYVYKPHIPYLRESKIDINVEECNSQLTLIAPYANKCYFIKNNDLKRRVENFLNLNINPQLSAHGGKVDLMNITESGYLSLKFSGGCNGCSMVQKTLKEGIEKQILAKFSEFKGVYDITQHNRGNHSYY</sequence>
<reference key="1">
    <citation type="journal article" date="2003" name="Proc. Natl. Acad. Sci. U.S.A.">
        <title>Reductive genome evolution in Buchnera aphidicola.</title>
        <authorList>
            <person name="van Ham R.C.H.J."/>
            <person name="Kamerbeek J."/>
            <person name="Palacios C."/>
            <person name="Rausell C."/>
            <person name="Abascal F."/>
            <person name="Bastolla U."/>
            <person name="Fernandez J.M."/>
            <person name="Jimenez L."/>
            <person name="Postigo M."/>
            <person name="Silva F.J."/>
            <person name="Tamames J."/>
            <person name="Viguera E."/>
            <person name="Latorre A."/>
            <person name="Valencia A."/>
            <person name="Moran F."/>
            <person name="Moya A."/>
        </authorList>
    </citation>
    <scope>NUCLEOTIDE SEQUENCE [LARGE SCALE GENOMIC DNA]</scope>
    <source>
        <strain>Bp</strain>
    </source>
</reference>
<gene>
    <name evidence="1" type="primary">nfuA</name>
    <name type="ordered locus">bbp_486</name>
</gene>